<evidence type="ECO:0000255" key="1">
    <source>
        <dbReference type="HAMAP-Rule" id="MF_00125"/>
    </source>
</evidence>
<comment type="function">
    <text evidence="1">Required for the first step of histidine biosynthesis. May allow the feedback regulation of ATP phosphoribosyltransferase activity by histidine.</text>
</comment>
<comment type="pathway">
    <text evidence="1">Amino-acid biosynthesis; L-histidine biosynthesis; L-histidine from 5-phospho-alpha-D-ribose 1-diphosphate: step 1/9.</text>
</comment>
<comment type="subunit">
    <text evidence="1">Heteromultimer composed of HisG and HisZ subunits.</text>
</comment>
<comment type="subcellular location">
    <subcellularLocation>
        <location evidence="1">Cytoplasm</location>
    </subcellularLocation>
</comment>
<comment type="miscellaneous">
    <text>This function is generally fulfilled by the C-terminal part of HisG, which is missing in some bacteria such as this one.</text>
</comment>
<comment type="similarity">
    <text evidence="1">Belongs to the class-II aminoacyl-tRNA synthetase family. HisZ subfamily.</text>
</comment>
<sequence>MATVDRWLLPDGIEEVLPPEAARIEVARRQVLDLFQSWGYEFVVTPHIEYLESLLTGAGQDLDLRTFKVIDPQSGRQMGFRADITPQVARIDAHTLRREGPSRLCYAGSVLHAQPRALSSSRSPIQLGAELYGDASPSSDVEVISLMLAMLQLADVPDVHMDLGHVGIYRGLAQAAGLSGAVEQQLFDALQRKAIDEVISLTEGLPADLADMLRSLVDLCGSREVLGDARRRLAGAPTSVLLALDELLTIAERLSVRFPDLPLYFDLGELRGYHYHTGVVFAVFVPGVGQSIAQGGRYDDIGADFGRARPATGFSTDLKTLVTLGRAEVELPSGGIWMPDNTDAALWQTVCRLRSEGQRVVQALPGQPLAAAREADCDRQLIQQNGLWQVLPLAS</sequence>
<accession>Q4KJ69</accession>
<feature type="chain" id="PRO_0000242847" description="ATP phosphoribosyltransferase regulatory subunit">
    <location>
        <begin position="1"/>
        <end position="395"/>
    </location>
</feature>
<dbReference type="EMBL" id="CP000076">
    <property type="protein sequence ID" value="AAY95979.1"/>
    <property type="molecule type" value="Genomic_DNA"/>
</dbReference>
<dbReference type="RefSeq" id="WP_011058942.1">
    <property type="nucleotide sequence ID" value="NC_004129.6"/>
</dbReference>
<dbReference type="SMR" id="Q4KJ69"/>
<dbReference type="STRING" id="220664.PFL_0570"/>
<dbReference type="KEGG" id="pfl:PFL_0570"/>
<dbReference type="PATRIC" id="fig|220664.5.peg.588"/>
<dbReference type="eggNOG" id="COG3705">
    <property type="taxonomic scope" value="Bacteria"/>
</dbReference>
<dbReference type="HOGENOM" id="CLU_025113_0_1_6"/>
<dbReference type="UniPathway" id="UPA00031">
    <property type="reaction ID" value="UER00006"/>
</dbReference>
<dbReference type="Proteomes" id="UP000008540">
    <property type="component" value="Chromosome"/>
</dbReference>
<dbReference type="GO" id="GO:0005737">
    <property type="term" value="C:cytoplasm"/>
    <property type="evidence" value="ECO:0007669"/>
    <property type="project" value="UniProtKB-SubCell"/>
</dbReference>
<dbReference type="GO" id="GO:0000105">
    <property type="term" value="P:L-histidine biosynthetic process"/>
    <property type="evidence" value="ECO:0007669"/>
    <property type="project" value="UniProtKB-UniRule"/>
</dbReference>
<dbReference type="CDD" id="cd00773">
    <property type="entry name" value="HisRS-like_core"/>
    <property type="match status" value="1"/>
</dbReference>
<dbReference type="Gene3D" id="3.30.930.10">
    <property type="entry name" value="Bira Bifunctional Protein, Domain 2"/>
    <property type="match status" value="1"/>
</dbReference>
<dbReference type="HAMAP" id="MF_00125">
    <property type="entry name" value="HisZ"/>
    <property type="match status" value="1"/>
</dbReference>
<dbReference type="InterPro" id="IPR045864">
    <property type="entry name" value="aa-tRNA-synth_II/BPL/LPL"/>
</dbReference>
<dbReference type="InterPro" id="IPR041715">
    <property type="entry name" value="HisRS-like_core"/>
</dbReference>
<dbReference type="InterPro" id="IPR004516">
    <property type="entry name" value="HisRS/HisZ"/>
</dbReference>
<dbReference type="InterPro" id="IPR004517">
    <property type="entry name" value="HisZ"/>
</dbReference>
<dbReference type="NCBIfam" id="TIGR00443">
    <property type="entry name" value="hisZ_biosyn_reg"/>
    <property type="match status" value="1"/>
</dbReference>
<dbReference type="NCBIfam" id="NF008935">
    <property type="entry name" value="PRK12292.1-1"/>
    <property type="match status" value="1"/>
</dbReference>
<dbReference type="NCBIfam" id="NF008937">
    <property type="entry name" value="PRK12292.1-4"/>
    <property type="match status" value="1"/>
</dbReference>
<dbReference type="NCBIfam" id="NF009086">
    <property type="entry name" value="PRK12421.1"/>
    <property type="match status" value="1"/>
</dbReference>
<dbReference type="PANTHER" id="PTHR11476:SF7">
    <property type="entry name" value="HISTIDINE--TRNA LIGASE"/>
    <property type="match status" value="1"/>
</dbReference>
<dbReference type="PANTHER" id="PTHR11476">
    <property type="entry name" value="HISTIDYL-TRNA SYNTHETASE"/>
    <property type="match status" value="1"/>
</dbReference>
<dbReference type="Pfam" id="PF13393">
    <property type="entry name" value="tRNA-synt_His"/>
    <property type="match status" value="1"/>
</dbReference>
<dbReference type="PIRSF" id="PIRSF001549">
    <property type="entry name" value="His-tRNA_synth"/>
    <property type="match status" value="1"/>
</dbReference>
<dbReference type="SUPFAM" id="SSF55681">
    <property type="entry name" value="Class II aaRS and biotin synthetases"/>
    <property type="match status" value="1"/>
</dbReference>
<keyword id="KW-0028">Amino-acid biosynthesis</keyword>
<keyword id="KW-0963">Cytoplasm</keyword>
<keyword id="KW-0368">Histidine biosynthesis</keyword>
<organism>
    <name type="scientific">Pseudomonas fluorescens (strain ATCC BAA-477 / NRRL B-23932 / Pf-5)</name>
    <dbReference type="NCBI Taxonomy" id="220664"/>
    <lineage>
        <taxon>Bacteria</taxon>
        <taxon>Pseudomonadati</taxon>
        <taxon>Pseudomonadota</taxon>
        <taxon>Gammaproteobacteria</taxon>
        <taxon>Pseudomonadales</taxon>
        <taxon>Pseudomonadaceae</taxon>
        <taxon>Pseudomonas</taxon>
    </lineage>
</organism>
<protein>
    <recommendedName>
        <fullName evidence="1">ATP phosphoribosyltransferase regulatory subunit</fullName>
    </recommendedName>
</protein>
<name>HISZ_PSEF5</name>
<reference key="1">
    <citation type="journal article" date="2005" name="Nat. Biotechnol.">
        <title>Complete genome sequence of the plant commensal Pseudomonas fluorescens Pf-5.</title>
        <authorList>
            <person name="Paulsen I.T."/>
            <person name="Press C.M."/>
            <person name="Ravel J."/>
            <person name="Kobayashi D.Y."/>
            <person name="Myers G.S.A."/>
            <person name="Mavrodi D.V."/>
            <person name="DeBoy R.T."/>
            <person name="Seshadri R."/>
            <person name="Ren Q."/>
            <person name="Madupu R."/>
            <person name="Dodson R.J."/>
            <person name="Durkin A.S."/>
            <person name="Brinkac L.M."/>
            <person name="Daugherty S.C."/>
            <person name="Sullivan S.A."/>
            <person name="Rosovitz M.J."/>
            <person name="Gwinn M.L."/>
            <person name="Zhou L."/>
            <person name="Schneider D.J."/>
            <person name="Cartinhour S.W."/>
            <person name="Nelson W.C."/>
            <person name="Weidman J."/>
            <person name="Watkins K."/>
            <person name="Tran K."/>
            <person name="Khouri H."/>
            <person name="Pierson E.A."/>
            <person name="Pierson L.S. III"/>
            <person name="Thomashow L.S."/>
            <person name="Loper J.E."/>
        </authorList>
    </citation>
    <scope>NUCLEOTIDE SEQUENCE [LARGE SCALE GENOMIC DNA]</scope>
    <source>
        <strain>ATCC BAA-477 / NRRL B-23932 / Pf-5</strain>
    </source>
</reference>
<gene>
    <name evidence="1" type="primary">hisZ</name>
    <name type="ordered locus">PFL_0570</name>
</gene>
<proteinExistence type="inferred from homology"/>